<name>SEML_HUMAN</name>
<sequence length="128" mass="14085">MYCQDSNICAVFAVQGGKVGRKHGIKRGRRPSIRSPAQRARGPWIHESKHPAFAKQQINLEMPNSRATTELAWVCSSTSRKKKWARSLTLSTAPLSPPPSLVHCEDCSCLPGCHSGDLYNLAPAERTC</sequence>
<accession>Q6ZVN7</accession>
<evidence type="ECO:0000256" key="1">
    <source>
        <dbReference type="SAM" id="MobiDB-lite"/>
    </source>
</evidence>
<evidence type="ECO:0000305" key="2"/>
<evidence type="ECO:0000312" key="3">
    <source>
        <dbReference type="HGNC" id="HGNC:10845"/>
    </source>
</evidence>
<reference key="1">
    <citation type="journal article" date="2004" name="Nat. Genet.">
        <title>Complete sequencing and characterization of 21,243 full-length human cDNAs.</title>
        <authorList>
            <person name="Ota T."/>
            <person name="Suzuki Y."/>
            <person name="Nishikawa T."/>
            <person name="Otsuki T."/>
            <person name="Sugiyama T."/>
            <person name="Irie R."/>
            <person name="Wakamatsu A."/>
            <person name="Hayashi K."/>
            <person name="Sato H."/>
            <person name="Nagai K."/>
            <person name="Kimura K."/>
            <person name="Makita H."/>
            <person name="Sekine M."/>
            <person name="Obayashi M."/>
            <person name="Nishi T."/>
            <person name="Shibahara T."/>
            <person name="Tanaka T."/>
            <person name="Ishii S."/>
            <person name="Yamamoto J."/>
            <person name="Saito K."/>
            <person name="Kawai Y."/>
            <person name="Isono Y."/>
            <person name="Nakamura Y."/>
            <person name="Nagahari K."/>
            <person name="Murakami K."/>
            <person name="Yasuda T."/>
            <person name="Iwayanagi T."/>
            <person name="Wagatsuma M."/>
            <person name="Shiratori A."/>
            <person name="Sudo H."/>
            <person name="Hosoiri T."/>
            <person name="Kaku Y."/>
            <person name="Kodaira H."/>
            <person name="Kondo H."/>
            <person name="Sugawara M."/>
            <person name="Takahashi M."/>
            <person name="Kanda K."/>
            <person name="Yokoi T."/>
            <person name="Furuya T."/>
            <person name="Kikkawa E."/>
            <person name="Omura Y."/>
            <person name="Abe K."/>
            <person name="Kamihara K."/>
            <person name="Katsuta N."/>
            <person name="Sato K."/>
            <person name="Tanikawa M."/>
            <person name="Yamazaki M."/>
            <person name="Ninomiya K."/>
            <person name="Ishibashi T."/>
            <person name="Yamashita H."/>
            <person name="Murakawa K."/>
            <person name="Fujimori K."/>
            <person name="Tanai H."/>
            <person name="Kimata M."/>
            <person name="Watanabe M."/>
            <person name="Hiraoka S."/>
            <person name="Chiba Y."/>
            <person name="Ishida S."/>
            <person name="Ono Y."/>
            <person name="Takiguchi S."/>
            <person name="Watanabe S."/>
            <person name="Yosida M."/>
            <person name="Hotuta T."/>
            <person name="Kusano J."/>
            <person name="Kanehori K."/>
            <person name="Takahashi-Fujii A."/>
            <person name="Hara H."/>
            <person name="Tanase T.-O."/>
            <person name="Nomura Y."/>
            <person name="Togiya S."/>
            <person name="Komai F."/>
            <person name="Hara R."/>
            <person name="Takeuchi K."/>
            <person name="Arita M."/>
            <person name="Imose N."/>
            <person name="Musashino K."/>
            <person name="Yuuki H."/>
            <person name="Oshima A."/>
            <person name="Sasaki N."/>
            <person name="Aotsuka S."/>
            <person name="Yoshikawa Y."/>
            <person name="Matsunawa H."/>
            <person name="Ichihara T."/>
            <person name="Shiohata N."/>
            <person name="Sano S."/>
            <person name="Moriya S."/>
            <person name="Momiyama H."/>
            <person name="Satoh N."/>
            <person name="Takami S."/>
            <person name="Terashima Y."/>
            <person name="Suzuki O."/>
            <person name="Nakagawa S."/>
            <person name="Senoh A."/>
            <person name="Mizoguchi H."/>
            <person name="Goto Y."/>
            <person name="Shimizu F."/>
            <person name="Wakebe H."/>
            <person name="Hishigaki H."/>
            <person name="Watanabe T."/>
            <person name="Sugiyama A."/>
            <person name="Takemoto M."/>
            <person name="Kawakami B."/>
            <person name="Yamazaki M."/>
            <person name="Watanabe K."/>
            <person name="Kumagai A."/>
            <person name="Itakura S."/>
            <person name="Fukuzumi Y."/>
            <person name="Fujimori Y."/>
            <person name="Komiyama M."/>
            <person name="Tashiro H."/>
            <person name="Tanigami A."/>
            <person name="Fujiwara T."/>
            <person name="Ono T."/>
            <person name="Yamada K."/>
            <person name="Fujii Y."/>
            <person name="Ozaki K."/>
            <person name="Hirao M."/>
            <person name="Ohmori Y."/>
            <person name="Kawabata A."/>
            <person name="Hikiji T."/>
            <person name="Kobatake N."/>
            <person name="Inagaki H."/>
            <person name="Ikema Y."/>
            <person name="Okamoto S."/>
            <person name="Okitani R."/>
            <person name="Kawakami T."/>
            <person name="Noguchi S."/>
            <person name="Itoh T."/>
            <person name="Shigeta K."/>
            <person name="Senba T."/>
            <person name="Matsumura K."/>
            <person name="Nakajima Y."/>
            <person name="Mizuno T."/>
            <person name="Morinaga M."/>
            <person name="Sasaki M."/>
            <person name="Togashi T."/>
            <person name="Oyama M."/>
            <person name="Hata H."/>
            <person name="Watanabe M."/>
            <person name="Komatsu T."/>
            <person name="Mizushima-Sugano J."/>
            <person name="Satoh T."/>
            <person name="Shirai Y."/>
            <person name="Takahashi Y."/>
            <person name="Nakagawa K."/>
            <person name="Okumura K."/>
            <person name="Nagase T."/>
            <person name="Nomura N."/>
            <person name="Kikuchi H."/>
            <person name="Masuho Y."/>
            <person name="Yamashita R."/>
            <person name="Nakai K."/>
            <person name="Yada T."/>
            <person name="Nakamura Y."/>
            <person name="Ohara O."/>
            <person name="Isogai T."/>
            <person name="Sugano S."/>
        </authorList>
    </citation>
    <scope>NUCLEOTIDE SEQUENCE [LARGE SCALE MRNA]</scope>
    <source>
        <tissue>Liver</tissue>
    </source>
</reference>
<reference key="2">
    <citation type="journal article" date="2003" name="Nature">
        <title>The DNA sequence of human chromosome 7.</title>
        <authorList>
            <person name="Hillier L.W."/>
            <person name="Fulton R.S."/>
            <person name="Fulton L.A."/>
            <person name="Graves T.A."/>
            <person name="Pepin K.H."/>
            <person name="Wagner-McPherson C."/>
            <person name="Layman D."/>
            <person name="Maas J."/>
            <person name="Jaeger S."/>
            <person name="Walker R."/>
            <person name="Wylie K."/>
            <person name="Sekhon M."/>
            <person name="Becker M.C."/>
            <person name="O'Laughlin M.D."/>
            <person name="Schaller M.E."/>
            <person name="Fewell G.A."/>
            <person name="Delehaunty K.D."/>
            <person name="Miner T.L."/>
            <person name="Nash W.E."/>
            <person name="Cordes M."/>
            <person name="Du H."/>
            <person name="Sun H."/>
            <person name="Edwards J."/>
            <person name="Bradshaw-Cordum H."/>
            <person name="Ali J."/>
            <person name="Andrews S."/>
            <person name="Isak A."/>
            <person name="Vanbrunt A."/>
            <person name="Nguyen C."/>
            <person name="Du F."/>
            <person name="Lamar B."/>
            <person name="Courtney L."/>
            <person name="Kalicki J."/>
            <person name="Ozersky P."/>
            <person name="Bielicki L."/>
            <person name="Scott K."/>
            <person name="Holmes A."/>
            <person name="Harkins R."/>
            <person name="Harris A."/>
            <person name="Strong C.M."/>
            <person name="Hou S."/>
            <person name="Tomlinson C."/>
            <person name="Dauphin-Kohlberg S."/>
            <person name="Kozlowicz-Reilly A."/>
            <person name="Leonard S."/>
            <person name="Rohlfing T."/>
            <person name="Rock S.M."/>
            <person name="Tin-Wollam A.-M."/>
            <person name="Abbott A."/>
            <person name="Minx P."/>
            <person name="Maupin R."/>
            <person name="Strowmatt C."/>
            <person name="Latreille P."/>
            <person name="Miller N."/>
            <person name="Johnson D."/>
            <person name="Murray J."/>
            <person name="Woessner J.P."/>
            <person name="Wendl M.C."/>
            <person name="Yang S.-P."/>
            <person name="Schultz B.R."/>
            <person name="Wallis J.W."/>
            <person name="Spieth J."/>
            <person name="Bieri T.A."/>
            <person name="Nelson J.O."/>
            <person name="Berkowicz N."/>
            <person name="Wohldmann P.E."/>
            <person name="Cook L.L."/>
            <person name="Hickenbotham M.T."/>
            <person name="Eldred J."/>
            <person name="Williams D."/>
            <person name="Bedell J.A."/>
            <person name="Mardis E.R."/>
            <person name="Clifton S.W."/>
            <person name="Chissoe S.L."/>
            <person name="Marra M.A."/>
            <person name="Raymond C."/>
            <person name="Haugen E."/>
            <person name="Gillett W."/>
            <person name="Zhou Y."/>
            <person name="James R."/>
            <person name="Phelps K."/>
            <person name="Iadanoto S."/>
            <person name="Bubb K."/>
            <person name="Simms E."/>
            <person name="Levy R."/>
            <person name="Clendenning J."/>
            <person name="Kaul R."/>
            <person name="Kent W.J."/>
            <person name="Furey T.S."/>
            <person name="Baertsch R.A."/>
            <person name="Brent M.R."/>
            <person name="Keibler E."/>
            <person name="Flicek P."/>
            <person name="Bork P."/>
            <person name="Suyama M."/>
            <person name="Bailey J.A."/>
            <person name="Portnoy M.E."/>
            <person name="Torrents D."/>
            <person name="Chinwalla A.T."/>
            <person name="Gish W.R."/>
            <person name="Eddy S.R."/>
            <person name="McPherson J.D."/>
            <person name="Olson M.V."/>
            <person name="Eichler E.E."/>
            <person name="Green E.D."/>
            <person name="Waterston R.H."/>
            <person name="Wilson R.K."/>
        </authorList>
    </citation>
    <scope>NUCLEOTIDE SEQUENCE [LARGE SCALE GENOMIC DNA]</scope>
</reference>
<proteinExistence type="evidence at transcript level"/>
<keyword id="KW-0877">Alternative promoter usage</keyword>
<keyword id="KW-1185">Reference proteome</keyword>
<comment type="alternative products">
    <event type="alternative promoter"/>
    <isoform>
        <id>Q6ZVN7-1</id>
        <name>2</name>
        <sequence type="displayed"/>
    </isoform>
    <isoform>
        <id>P60896-1</id>
        <name>1</name>
        <sequence type="external"/>
    </isoform>
</comment>
<dbReference type="EMBL" id="AK124274">
    <property type="protein sequence ID" value="BAC85824.1"/>
    <property type="molecule type" value="mRNA"/>
</dbReference>
<dbReference type="EMBL" id="AC092031">
    <property type="status" value="NOT_ANNOTATED_CDS"/>
    <property type="molecule type" value="Genomic_DNA"/>
</dbReference>
<dbReference type="RefSeq" id="NP_001188379.1">
    <property type="nucleotide sequence ID" value="NM_001201450.1"/>
</dbReference>
<dbReference type="RefSeq" id="NP_001188380.1">
    <property type="nucleotide sequence ID" value="NM_001201451.1"/>
</dbReference>
<dbReference type="BioGRID" id="135063">
    <property type="interactions" value="58"/>
</dbReference>
<dbReference type="FunCoup" id="Q6ZVN7">
    <property type="interactions" value="155"/>
</dbReference>
<dbReference type="STRING" id="9606.ENSP00000481021"/>
<dbReference type="BioMuta" id="SEM1"/>
<dbReference type="PaxDb" id="9606-ENSP00000481021"/>
<dbReference type="Antibodypedia" id="30181">
    <property type="antibodies" value="141 antibodies from 27 providers"/>
</dbReference>
<dbReference type="Ensembl" id="ENST00000356686.2">
    <molecule id="Q6ZVN7-1"/>
    <property type="protein sequence ID" value="ENSP00000349114.1"/>
    <property type="gene ID" value="ENSG00000127922.10"/>
</dbReference>
<dbReference type="UCSC" id="uc064fom.1">
    <molecule id="Q6ZVN7-1"/>
    <property type="organism name" value="human"/>
</dbReference>
<dbReference type="AGR" id="HGNC:10845"/>
<dbReference type="GeneCards" id="SEM1"/>
<dbReference type="HGNC" id="HGNC:10845">
    <property type="gene designation" value="SEM1"/>
</dbReference>
<dbReference type="HPA" id="ENSG00000127922">
    <property type="expression patterns" value="Low tissue specificity"/>
</dbReference>
<dbReference type="MalaCards" id="SEM1"/>
<dbReference type="neXtProt" id="NX_Q6ZVN7"/>
<dbReference type="OpenTargets" id="ENSG00000127922"/>
<dbReference type="VEuPathDB" id="HostDB:ENSG00000127922"/>
<dbReference type="eggNOG" id="ENOG502TE1I">
    <property type="taxonomic scope" value="Eukaryota"/>
</dbReference>
<dbReference type="GeneTree" id="ENSGT00940000162732"/>
<dbReference type="HOGENOM" id="CLU_2009139_0_0_1"/>
<dbReference type="InParanoid" id="Q6ZVN7"/>
<dbReference type="OrthoDB" id="9527655at2759"/>
<dbReference type="PAN-GO" id="Q6ZVN7">
    <property type="GO annotations" value="2 GO annotations based on evolutionary models"/>
</dbReference>
<dbReference type="PhylomeDB" id="Q6ZVN7"/>
<dbReference type="PathwayCommons" id="Q6ZVN7"/>
<dbReference type="SignaLink" id="Q6ZVN7"/>
<dbReference type="BioGRID-ORCS" id="7979">
    <property type="hits" value="692 hits in 1156 CRISPR screens"/>
</dbReference>
<dbReference type="ChiTaRS" id="SHFM1">
    <property type="organism name" value="human"/>
</dbReference>
<dbReference type="GenomeRNAi" id="7979"/>
<dbReference type="Pharos" id="Q6ZVN7">
    <property type="development level" value="Tbio"/>
</dbReference>
<dbReference type="Proteomes" id="UP000005640">
    <property type="component" value="Chromosome 7"/>
</dbReference>
<dbReference type="RNAct" id="Q6ZVN7">
    <property type="molecule type" value="protein"/>
</dbReference>
<dbReference type="Bgee" id="ENSG00000127922">
    <property type="expression patterns" value="Expressed in calcaneal tendon and 204 other cell types or tissues"/>
</dbReference>
<dbReference type="ExpressionAtlas" id="Q6ZVN7">
    <property type="expression patterns" value="baseline and differential"/>
</dbReference>
<dbReference type="GO" id="GO:0000502">
    <property type="term" value="C:proteasome complex"/>
    <property type="evidence" value="ECO:0000318"/>
    <property type="project" value="GO_Central"/>
</dbReference>
<dbReference type="GO" id="GO:0000724">
    <property type="term" value="P:double-strand break repair via homologous recombination"/>
    <property type="evidence" value="ECO:0000318"/>
    <property type="project" value="GO_Central"/>
</dbReference>
<dbReference type="InterPro" id="IPR041319">
    <property type="entry name" value="DUF5543"/>
</dbReference>
<dbReference type="Pfam" id="PF17697">
    <property type="entry name" value="DUF5543"/>
    <property type="match status" value="1"/>
</dbReference>
<feature type="chain" id="PRO_0000319035" description="Putative protein SEM1, isoform 2">
    <location>
        <begin position="1"/>
        <end position="128"/>
    </location>
</feature>
<feature type="region of interest" description="Disordered" evidence="1">
    <location>
        <begin position="22"/>
        <end position="42"/>
    </location>
</feature>
<feature type="compositionally biased region" description="Basic residues" evidence="1">
    <location>
        <begin position="22"/>
        <end position="32"/>
    </location>
</feature>
<feature type="sequence conflict" description="In Ref. 1; BAC85824." evidence="2" ref="1">
    <original>R</original>
    <variation>G</variation>
    <location>
        <position position="86"/>
    </location>
</feature>
<protein>
    <recommendedName>
        <fullName evidence="3">Putative protein SEM1, isoform 2</fullName>
    </recommendedName>
</protein>
<gene>
    <name evidence="3" type="primary">SEM1</name>
    <name type="synonym">C7orf76</name>
</gene>
<organism>
    <name type="scientific">Homo sapiens</name>
    <name type="common">Human</name>
    <dbReference type="NCBI Taxonomy" id="9606"/>
    <lineage>
        <taxon>Eukaryota</taxon>
        <taxon>Metazoa</taxon>
        <taxon>Chordata</taxon>
        <taxon>Craniata</taxon>
        <taxon>Vertebrata</taxon>
        <taxon>Euteleostomi</taxon>
        <taxon>Mammalia</taxon>
        <taxon>Eutheria</taxon>
        <taxon>Euarchontoglires</taxon>
        <taxon>Primates</taxon>
        <taxon>Haplorrhini</taxon>
        <taxon>Catarrhini</taxon>
        <taxon>Hominidae</taxon>
        <taxon>Homo</taxon>
    </lineage>
</organism>